<comment type="function">
    <text evidence="1">Forms oxaloacetate, a four-carbon dicarboxylic acid source for the tricarboxylic acid cycle.</text>
</comment>
<comment type="catalytic activity">
    <reaction evidence="1">
        <text>oxaloacetate + phosphate = phosphoenolpyruvate + hydrogencarbonate</text>
        <dbReference type="Rhea" id="RHEA:28370"/>
        <dbReference type="ChEBI" id="CHEBI:16452"/>
        <dbReference type="ChEBI" id="CHEBI:17544"/>
        <dbReference type="ChEBI" id="CHEBI:43474"/>
        <dbReference type="ChEBI" id="CHEBI:58702"/>
        <dbReference type="EC" id="4.1.1.31"/>
    </reaction>
</comment>
<comment type="cofactor">
    <cofactor evidence="1">
        <name>Mg(2+)</name>
        <dbReference type="ChEBI" id="CHEBI:18420"/>
    </cofactor>
</comment>
<comment type="similarity">
    <text evidence="1">Belongs to the PEPCase type 1 family.</text>
</comment>
<organism>
    <name type="scientific">Tolumonas auensis (strain DSM 9187 / NBRC 110442 / TA 4)</name>
    <dbReference type="NCBI Taxonomy" id="595494"/>
    <lineage>
        <taxon>Bacteria</taxon>
        <taxon>Pseudomonadati</taxon>
        <taxon>Pseudomonadota</taxon>
        <taxon>Gammaproteobacteria</taxon>
        <taxon>Aeromonadales</taxon>
        <taxon>Aeromonadaceae</taxon>
        <taxon>Tolumonas</taxon>
    </lineage>
</organism>
<gene>
    <name evidence="1" type="primary">ppc</name>
    <name type="ordered locus">Tola_0092</name>
</gene>
<protein>
    <recommendedName>
        <fullName evidence="1">Phosphoenolpyruvate carboxylase</fullName>
        <shortName evidence="1">PEPC</shortName>
        <shortName evidence="1">PEPCase</shortName>
        <ecNumber evidence="1">4.1.1.31</ecNumber>
    </recommendedName>
</protein>
<name>CAPP_TOLAT</name>
<reference key="1">
    <citation type="submission" date="2009-05" db="EMBL/GenBank/DDBJ databases">
        <title>Complete sequence of Tolumonas auensis DSM 9187.</title>
        <authorList>
            <consortium name="US DOE Joint Genome Institute"/>
            <person name="Lucas S."/>
            <person name="Copeland A."/>
            <person name="Lapidus A."/>
            <person name="Glavina del Rio T."/>
            <person name="Tice H."/>
            <person name="Bruce D."/>
            <person name="Goodwin L."/>
            <person name="Pitluck S."/>
            <person name="Chertkov O."/>
            <person name="Brettin T."/>
            <person name="Detter J.C."/>
            <person name="Han C."/>
            <person name="Larimer F."/>
            <person name="Land M."/>
            <person name="Hauser L."/>
            <person name="Kyrpides N."/>
            <person name="Mikhailova N."/>
            <person name="Spring S."/>
            <person name="Beller H."/>
        </authorList>
    </citation>
    <scope>NUCLEOTIDE SEQUENCE [LARGE SCALE GENOMIC DNA]</scope>
    <source>
        <strain>DSM 9187 / NBRC 110442 / TA 4</strain>
    </source>
</reference>
<keyword id="KW-0120">Carbon dioxide fixation</keyword>
<keyword id="KW-0456">Lyase</keyword>
<keyword id="KW-0460">Magnesium</keyword>
<keyword id="KW-1185">Reference proteome</keyword>
<accession>C4L7S3</accession>
<proteinExistence type="inferred from homology"/>
<sequence>MNDMYAALRGNVGMLGHLLGKTIKEHLGDEFLDKIENIRQLAKSSRQGNEEDRQKLITTLKNLSDDELLPVARAFSQFLNLANVAEQFHSMSRQGELHTTLDPLDSLFDKLKNANLSEQEIIDTVCELDIELVLTAHPTEVTRRTLIHKHVQLNECLEELELQDLTPRECKFIQHRIEQLVNQSWHTNEIREQRPTPVDEAKWGFAVIENNLWPAIPLFLRQLDDRLQENFGIRLPLRAHPVRIASWMGGDRDGNPFVTAKVTQEVLLLSRWVAINLFLTDIQELVSELSMTDCNEELRQRVGECSEPYRAILRVVRDSLRETQQAVTAKLQGQYTENRDLITRTEQLREPLELCYRSLQSCGMSIIADGMLLDVLRKLACFGVNLLKLDIRQDGERHGQVLSELTQYLELGDYAEWRETEKQEFLLKELASRRPLLPANWQPSAESQEVVDTCRVIAQTDPDAFGIYIISMARQPSDVLAVQLLLKEVGCKFHMPIAPLFETQNDLQNAAAVLNRLLSVEWYRNYIRGQQYVMIGYSDSAKDAGMMSAGWAQYRAMEDLVAIAEREDLKLTLFHGRGGTIGRGGGPAHQAILSQPPGSLKGGFRVTEQGEMIRFKFGLPEVAIHNFKLYTSAVLEANLLPPPKPEAAWYDVMDKLSEISCQHYRSIVRDEPDFVPYFRAATPEMELGKLPLGSRPSKRKPNGGVESLRAIPWIFAWTQNRLMLPSWLGAHVALQAVMDEGKEDLLKEMDQQWPFFHTRLEMLEMVFLKADLWLAEYYDLRLAPENLWPLGKRLRQELQDSINVVLQLLPKRGELLDDQPWIKESIKLRNPYTDPLNVLQVELLHRSRATPDEVNPQVDQALMVTIAGIAAGMRNTG</sequence>
<feature type="chain" id="PRO_1000212179" description="Phosphoenolpyruvate carboxylase">
    <location>
        <begin position="1"/>
        <end position="877"/>
    </location>
</feature>
<feature type="active site" evidence="1">
    <location>
        <position position="137"/>
    </location>
</feature>
<feature type="active site" evidence="1">
    <location>
        <position position="542"/>
    </location>
</feature>
<evidence type="ECO:0000255" key="1">
    <source>
        <dbReference type="HAMAP-Rule" id="MF_00595"/>
    </source>
</evidence>
<dbReference type="EC" id="4.1.1.31" evidence="1"/>
<dbReference type="EMBL" id="CP001616">
    <property type="protein sequence ID" value="ACQ91722.1"/>
    <property type="molecule type" value="Genomic_DNA"/>
</dbReference>
<dbReference type="RefSeq" id="WP_012728322.1">
    <property type="nucleotide sequence ID" value="NC_012691.1"/>
</dbReference>
<dbReference type="SMR" id="C4L7S3"/>
<dbReference type="STRING" id="595494.Tola_0092"/>
<dbReference type="KEGG" id="tau:Tola_0092"/>
<dbReference type="eggNOG" id="COG2352">
    <property type="taxonomic scope" value="Bacteria"/>
</dbReference>
<dbReference type="HOGENOM" id="CLU_006557_2_0_6"/>
<dbReference type="OrthoDB" id="9768133at2"/>
<dbReference type="Proteomes" id="UP000009073">
    <property type="component" value="Chromosome"/>
</dbReference>
<dbReference type="GO" id="GO:0005829">
    <property type="term" value="C:cytosol"/>
    <property type="evidence" value="ECO:0007669"/>
    <property type="project" value="TreeGrafter"/>
</dbReference>
<dbReference type="GO" id="GO:0000287">
    <property type="term" value="F:magnesium ion binding"/>
    <property type="evidence" value="ECO:0007669"/>
    <property type="project" value="UniProtKB-UniRule"/>
</dbReference>
<dbReference type="GO" id="GO:0008964">
    <property type="term" value="F:phosphoenolpyruvate carboxylase activity"/>
    <property type="evidence" value="ECO:0007669"/>
    <property type="project" value="UniProtKB-UniRule"/>
</dbReference>
<dbReference type="GO" id="GO:0015977">
    <property type="term" value="P:carbon fixation"/>
    <property type="evidence" value="ECO:0007669"/>
    <property type="project" value="UniProtKB-UniRule"/>
</dbReference>
<dbReference type="GO" id="GO:0006107">
    <property type="term" value="P:oxaloacetate metabolic process"/>
    <property type="evidence" value="ECO:0007669"/>
    <property type="project" value="UniProtKB-UniRule"/>
</dbReference>
<dbReference type="GO" id="GO:0006099">
    <property type="term" value="P:tricarboxylic acid cycle"/>
    <property type="evidence" value="ECO:0007669"/>
    <property type="project" value="InterPro"/>
</dbReference>
<dbReference type="Gene3D" id="1.20.1440.90">
    <property type="entry name" value="Phosphoenolpyruvate/pyruvate domain"/>
    <property type="match status" value="1"/>
</dbReference>
<dbReference type="HAMAP" id="MF_00595">
    <property type="entry name" value="PEPcase_type1"/>
    <property type="match status" value="1"/>
</dbReference>
<dbReference type="InterPro" id="IPR021135">
    <property type="entry name" value="PEP_COase"/>
</dbReference>
<dbReference type="InterPro" id="IPR022805">
    <property type="entry name" value="PEP_COase_bac/pln-type"/>
</dbReference>
<dbReference type="InterPro" id="IPR018129">
    <property type="entry name" value="PEP_COase_Lys_AS"/>
</dbReference>
<dbReference type="InterPro" id="IPR033129">
    <property type="entry name" value="PEPCASE_His_AS"/>
</dbReference>
<dbReference type="InterPro" id="IPR015813">
    <property type="entry name" value="Pyrv/PenolPyrv_kinase-like_dom"/>
</dbReference>
<dbReference type="NCBIfam" id="NF000584">
    <property type="entry name" value="PRK00009.1"/>
    <property type="match status" value="1"/>
</dbReference>
<dbReference type="PANTHER" id="PTHR30523">
    <property type="entry name" value="PHOSPHOENOLPYRUVATE CARBOXYLASE"/>
    <property type="match status" value="1"/>
</dbReference>
<dbReference type="PANTHER" id="PTHR30523:SF6">
    <property type="entry name" value="PHOSPHOENOLPYRUVATE CARBOXYLASE"/>
    <property type="match status" value="1"/>
</dbReference>
<dbReference type="Pfam" id="PF00311">
    <property type="entry name" value="PEPcase"/>
    <property type="match status" value="1"/>
</dbReference>
<dbReference type="PRINTS" id="PR00150">
    <property type="entry name" value="PEPCARBXLASE"/>
</dbReference>
<dbReference type="SUPFAM" id="SSF51621">
    <property type="entry name" value="Phosphoenolpyruvate/pyruvate domain"/>
    <property type="match status" value="1"/>
</dbReference>
<dbReference type="PROSITE" id="PS00781">
    <property type="entry name" value="PEPCASE_1"/>
    <property type="match status" value="1"/>
</dbReference>
<dbReference type="PROSITE" id="PS00393">
    <property type="entry name" value="PEPCASE_2"/>
    <property type="match status" value="1"/>
</dbReference>